<accession>Q1QQY7</accession>
<proteinExistence type="inferred from homology"/>
<feature type="chain" id="PRO_0000263305" description="Peptide chain release factor 1">
    <location>
        <begin position="1"/>
        <end position="361"/>
    </location>
</feature>
<feature type="region of interest" description="Disordered" evidence="2">
    <location>
        <begin position="288"/>
        <end position="307"/>
    </location>
</feature>
<feature type="modified residue" description="N5-methylglutamine" evidence="1">
    <location>
        <position position="235"/>
    </location>
</feature>
<reference key="1">
    <citation type="submission" date="2006-03" db="EMBL/GenBank/DDBJ databases">
        <title>Complete sequence of chromosome of Nitrobacter hamburgensis X14.</title>
        <authorList>
            <consortium name="US DOE Joint Genome Institute"/>
            <person name="Copeland A."/>
            <person name="Lucas S."/>
            <person name="Lapidus A."/>
            <person name="Barry K."/>
            <person name="Detter J.C."/>
            <person name="Glavina del Rio T."/>
            <person name="Hammon N."/>
            <person name="Israni S."/>
            <person name="Dalin E."/>
            <person name="Tice H."/>
            <person name="Pitluck S."/>
            <person name="Chain P."/>
            <person name="Malfatti S."/>
            <person name="Shin M."/>
            <person name="Vergez L."/>
            <person name="Schmutz J."/>
            <person name="Larimer F."/>
            <person name="Land M."/>
            <person name="Hauser L."/>
            <person name="Kyrpides N."/>
            <person name="Ivanova N."/>
            <person name="Ward B."/>
            <person name="Arp D."/>
            <person name="Klotz M."/>
            <person name="Stein L."/>
            <person name="O'Mullan G."/>
            <person name="Starkenburg S."/>
            <person name="Sayavedra L."/>
            <person name="Poret-Peterson A.T."/>
            <person name="Gentry M.E."/>
            <person name="Bruce D."/>
            <person name="Richardson P."/>
        </authorList>
    </citation>
    <scope>NUCLEOTIDE SEQUENCE [LARGE SCALE GENOMIC DNA]</scope>
    <source>
        <strain>DSM 10229 / NCIMB 13809 / X14</strain>
    </source>
</reference>
<protein>
    <recommendedName>
        <fullName evidence="1">Peptide chain release factor 1</fullName>
        <shortName evidence="1">RF-1</shortName>
    </recommendedName>
</protein>
<organism>
    <name type="scientific">Nitrobacter hamburgensis (strain DSM 10229 / NCIMB 13809 / X14)</name>
    <dbReference type="NCBI Taxonomy" id="323097"/>
    <lineage>
        <taxon>Bacteria</taxon>
        <taxon>Pseudomonadati</taxon>
        <taxon>Pseudomonadota</taxon>
        <taxon>Alphaproteobacteria</taxon>
        <taxon>Hyphomicrobiales</taxon>
        <taxon>Nitrobacteraceae</taxon>
        <taxon>Nitrobacter</taxon>
    </lineage>
</organism>
<comment type="function">
    <text evidence="1">Peptide chain release factor 1 directs the termination of translation in response to the peptide chain termination codons UAG and UAA.</text>
</comment>
<comment type="subcellular location">
    <subcellularLocation>
        <location evidence="1">Cytoplasm</location>
    </subcellularLocation>
</comment>
<comment type="PTM">
    <text evidence="1">Methylated by PrmC. Methylation increases the termination efficiency of RF1.</text>
</comment>
<comment type="similarity">
    <text evidence="1">Belongs to the prokaryotic/mitochondrial release factor family.</text>
</comment>
<keyword id="KW-0963">Cytoplasm</keyword>
<keyword id="KW-0488">Methylation</keyword>
<keyword id="KW-0648">Protein biosynthesis</keyword>
<keyword id="KW-1185">Reference proteome</keyword>
<sequence length="361" mass="39633">MSSLPEAKLDILLARHAALENELLSQISAERYVQMTRELSELNPVVEAVKNWRAVKTEIAGIDAMIADPATDAEMRAMAEAERPALGARGDELAQKIRVALLPKDAMDERNVMLEIRAGTGGDEASLFAGDLFRMYERFAGLQGWKVEAISASEGTMGGYKEIVAEVRGRGAYAKLKFESGVHRVQRVPDTETQGRVHTSAATVAVLPEAEEVDVDIKTDDLRIETMRAQGAGGQHVNKTESAIRITHIPTGIVVMMQDSRSQHKNRASAMNILRSRIYDAERQRINAARSADRKDQVGSGDRSERIRTYNFPQGRVTDHRINLTLYKLPQVIAGDALHELIDALTTEHQAAQLATEGGGA</sequence>
<gene>
    <name evidence="1" type="primary">prfA</name>
    <name type="ordered locus">Nham_0470</name>
</gene>
<dbReference type="EMBL" id="CP000319">
    <property type="protein sequence ID" value="ABE61360.1"/>
    <property type="molecule type" value="Genomic_DNA"/>
</dbReference>
<dbReference type="RefSeq" id="WP_011509064.1">
    <property type="nucleotide sequence ID" value="NC_007964.1"/>
</dbReference>
<dbReference type="SMR" id="Q1QQY7"/>
<dbReference type="STRING" id="323097.Nham_0470"/>
<dbReference type="KEGG" id="nha:Nham_0470"/>
<dbReference type="eggNOG" id="COG0216">
    <property type="taxonomic scope" value="Bacteria"/>
</dbReference>
<dbReference type="HOGENOM" id="CLU_036856_0_1_5"/>
<dbReference type="OrthoDB" id="9806673at2"/>
<dbReference type="Proteomes" id="UP000001953">
    <property type="component" value="Chromosome"/>
</dbReference>
<dbReference type="GO" id="GO:0005737">
    <property type="term" value="C:cytoplasm"/>
    <property type="evidence" value="ECO:0007669"/>
    <property type="project" value="UniProtKB-SubCell"/>
</dbReference>
<dbReference type="GO" id="GO:0016149">
    <property type="term" value="F:translation release factor activity, codon specific"/>
    <property type="evidence" value="ECO:0007669"/>
    <property type="project" value="UniProtKB-UniRule"/>
</dbReference>
<dbReference type="FunFam" id="3.30.160.20:FF:000004">
    <property type="entry name" value="Peptide chain release factor 1"/>
    <property type="match status" value="1"/>
</dbReference>
<dbReference type="FunFam" id="3.30.70.1660:FF:000002">
    <property type="entry name" value="Peptide chain release factor 1"/>
    <property type="match status" value="1"/>
</dbReference>
<dbReference type="FunFam" id="3.30.70.1660:FF:000004">
    <property type="entry name" value="Peptide chain release factor 1"/>
    <property type="match status" value="1"/>
</dbReference>
<dbReference type="Gene3D" id="3.30.160.20">
    <property type="match status" value="1"/>
</dbReference>
<dbReference type="Gene3D" id="3.30.70.1660">
    <property type="match status" value="1"/>
</dbReference>
<dbReference type="Gene3D" id="6.10.140.1950">
    <property type="match status" value="1"/>
</dbReference>
<dbReference type="HAMAP" id="MF_00093">
    <property type="entry name" value="Rel_fac_1"/>
    <property type="match status" value="1"/>
</dbReference>
<dbReference type="InterPro" id="IPR005139">
    <property type="entry name" value="PCRF"/>
</dbReference>
<dbReference type="InterPro" id="IPR000352">
    <property type="entry name" value="Pep_chain_release_fac_I"/>
</dbReference>
<dbReference type="InterPro" id="IPR045853">
    <property type="entry name" value="Pep_chain_release_fac_I_sf"/>
</dbReference>
<dbReference type="InterPro" id="IPR050057">
    <property type="entry name" value="Prokaryotic/Mito_RF"/>
</dbReference>
<dbReference type="InterPro" id="IPR004373">
    <property type="entry name" value="RF-1"/>
</dbReference>
<dbReference type="NCBIfam" id="TIGR00019">
    <property type="entry name" value="prfA"/>
    <property type="match status" value="1"/>
</dbReference>
<dbReference type="NCBIfam" id="NF001859">
    <property type="entry name" value="PRK00591.1"/>
    <property type="match status" value="1"/>
</dbReference>
<dbReference type="PANTHER" id="PTHR43804">
    <property type="entry name" value="LD18447P"/>
    <property type="match status" value="1"/>
</dbReference>
<dbReference type="PANTHER" id="PTHR43804:SF7">
    <property type="entry name" value="LD18447P"/>
    <property type="match status" value="1"/>
</dbReference>
<dbReference type="Pfam" id="PF03462">
    <property type="entry name" value="PCRF"/>
    <property type="match status" value="1"/>
</dbReference>
<dbReference type="Pfam" id="PF00472">
    <property type="entry name" value="RF-1"/>
    <property type="match status" value="1"/>
</dbReference>
<dbReference type="SMART" id="SM00937">
    <property type="entry name" value="PCRF"/>
    <property type="match status" value="1"/>
</dbReference>
<dbReference type="SUPFAM" id="SSF75620">
    <property type="entry name" value="Release factor"/>
    <property type="match status" value="1"/>
</dbReference>
<dbReference type="PROSITE" id="PS00745">
    <property type="entry name" value="RF_PROK_I"/>
    <property type="match status" value="1"/>
</dbReference>
<name>RF1_NITHX</name>
<evidence type="ECO:0000255" key="1">
    <source>
        <dbReference type="HAMAP-Rule" id="MF_00093"/>
    </source>
</evidence>
<evidence type="ECO:0000256" key="2">
    <source>
        <dbReference type="SAM" id="MobiDB-lite"/>
    </source>
</evidence>